<organism>
    <name type="scientific">Salmonella agona (strain SL483)</name>
    <dbReference type="NCBI Taxonomy" id="454166"/>
    <lineage>
        <taxon>Bacteria</taxon>
        <taxon>Pseudomonadati</taxon>
        <taxon>Pseudomonadota</taxon>
        <taxon>Gammaproteobacteria</taxon>
        <taxon>Enterobacterales</taxon>
        <taxon>Enterobacteriaceae</taxon>
        <taxon>Salmonella</taxon>
    </lineage>
</organism>
<keyword id="KW-0067">ATP-binding</keyword>
<keyword id="KW-0436">Ligase</keyword>
<keyword id="KW-0547">Nucleotide-binding</keyword>
<keyword id="KW-0658">Purine biosynthesis</keyword>
<dbReference type="EC" id="6.3.2.6" evidence="1"/>
<dbReference type="EMBL" id="CP001138">
    <property type="protein sequence ID" value="ACH51343.1"/>
    <property type="molecule type" value="Genomic_DNA"/>
</dbReference>
<dbReference type="RefSeq" id="WP_001171630.1">
    <property type="nucleotide sequence ID" value="NC_011149.1"/>
</dbReference>
<dbReference type="SMR" id="B5F0L3"/>
<dbReference type="KEGG" id="sea:SeAg_B2632"/>
<dbReference type="HOGENOM" id="CLU_061495_2_1_6"/>
<dbReference type="UniPathway" id="UPA00074">
    <property type="reaction ID" value="UER00131"/>
</dbReference>
<dbReference type="Proteomes" id="UP000008819">
    <property type="component" value="Chromosome"/>
</dbReference>
<dbReference type="GO" id="GO:0005829">
    <property type="term" value="C:cytosol"/>
    <property type="evidence" value="ECO:0007669"/>
    <property type="project" value="TreeGrafter"/>
</dbReference>
<dbReference type="GO" id="GO:0005524">
    <property type="term" value="F:ATP binding"/>
    <property type="evidence" value="ECO:0007669"/>
    <property type="project" value="UniProtKB-KW"/>
</dbReference>
<dbReference type="GO" id="GO:0004639">
    <property type="term" value="F:phosphoribosylaminoimidazolesuccinocarboxamide synthase activity"/>
    <property type="evidence" value="ECO:0007669"/>
    <property type="project" value="UniProtKB-UniRule"/>
</dbReference>
<dbReference type="GO" id="GO:0006189">
    <property type="term" value="P:'de novo' IMP biosynthetic process"/>
    <property type="evidence" value="ECO:0007669"/>
    <property type="project" value="UniProtKB-UniRule"/>
</dbReference>
<dbReference type="GO" id="GO:0009236">
    <property type="term" value="P:cobalamin biosynthetic process"/>
    <property type="evidence" value="ECO:0007669"/>
    <property type="project" value="InterPro"/>
</dbReference>
<dbReference type="CDD" id="cd01415">
    <property type="entry name" value="SAICAR_synt_PurC"/>
    <property type="match status" value="1"/>
</dbReference>
<dbReference type="FunFam" id="3.30.200.20:FF:000086">
    <property type="entry name" value="Phosphoribosylaminoimidazole-succinocarboxamide synthase"/>
    <property type="match status" value="1"/>
</dbReference>
<dbReference type="FunFam" id="3.30.470.20:FF:000006">
    <property type="entry name" value="Phosphoribosylaminoimidazole-succinocarboxamide synthase"/>
    <property type="match status" value="1"/>
</dbReference>
<dbReference type="Gene3D" id="3.30.470.20">
    <property type="entry name" value="ATP-grasp fold, B domain"/>
    <property type="match status" value="1"/>
</dbReference>
<dbReference type="Gene3D" id="3.30.200.20">
    <property type="entry name" value="Phosphorylase Kinase, domain 1"/>
    <property type="match status" value="1"/>
</dbReference>
<dbReference type="HAMAP" id="MF_00137">
    <property type="entry name" value="SAICAR_synth"/>
    <property type="match status" value="1"/>
</dbReference>
<dbReference type="InterPro" id="IPR028923">
    <property type="entry name" value="SAICAR_synt/ADE2_N"/>
</dbReference>
<dbReference type="InterPro" id="IPR033934">
    <property type="entry name" value="SAICAR_synt_PurC"/>
</dbReference>
<dbReference type="InterPro" id="IPR001636">
    <property type="entry name" value="SAICAR_synth"/>
</dbReference>
<dbReference type="InterPro" id="IPR050089">
    <property type="entry name" value="SAICAR_synthetase"/>
</dbReference>
<dbReference type="InterPro" id="IPR018236">
    <property type="entry name" value="SAICAR_synthetase_CS"/>
</dbReference>
<dbReference type="NCBIfam" id="TIGR00081">
    <property type="entry name" value="purC"/>
    <property type="match status" value="1"/>
</dbReference>
<dbReference type="PANTHER" id="PTHR43599">
    <property type="entry name" value="MULTIFUNCTIONAL PROTEIN ADE2"/>
    <property type="match status" value="1"/>
</dbReference>
<dbReference type="PANTHER" id="PTHR43599:SF3">
    <property type="entry name" value="SI:DKEY-6E2.2"/>
    <property type="match status" value="1"/>
</dbReference>
<dbReference type="Pfam" id="PF01259">
    <property type="entry name" value="SAICAR_synt"/>
    <property type="match status" value="1"/>
</dbReference>
<dbReference type="SUPFAM" id="SSF56104">
    <property type="entry name" value="SAICAR synthase-like"/>
    <property type="match status" value="1"/>
</dbReference>
<dbReference type="PROSITE" id="PS01057">
    <property type="entry name" value="SAICAR_SYNTHETASE_1"/>
    <property type="match status" value="1"/>
</dbReference>
<dbReference type="PROSITE" id="PS01058">
    <property type="entry name" value="SAICAR_SYNTHETASE_2"/>
    <property type="match status" value="1"/>
</dbReference>
<protein>
    <recommendedName>
        <fullName evidence="1">Phosphoribosylaminoimidazole-succinocarboxamide synthase</fullName>
        <ecNumber evidence="1">6.3.2.6</ecNumber>
    </recommendedName>
    <alternativeName>
        <fullName evidence="1">SAICAR synthetase</fullName>
    </alternativeName>
</protein>
<name>PUR7_SALA4</name>
<sequence>MQKQAELYRGKAKTVYSTENPDLLVLEFRNDTSAGDGARIEQFDRKGMVNNKFNHFIMTKLAEAGIPTQMERLLSDTECLVKKLEMVPVECVVRNRAAGSLVKRLGVEEGMELNPPIFDLFLKNDALHDPMVNSSYCETFGWVSQENLARMKELTYKANDVLKKLFDDAGLILVDFKLEFGLYKGEVVLGDEFSPDGSRLWDKETLDKMDKDRFRQSLGGLIEAYEAVAHRLGVKLD</sequence>
<comment type="catalytic activity">
    <reaction evidence="1">
        <text>5-amino-1-(5-phospho-D-ribosyl)imidazole-4-carboxylate + L-aspartate + ATP = (2S)-2-[5-amino-1-(5-phospho-beta-D-ribosyl)imidazole-4-carboxamido]succinate + ADP + phosphate + 2 H(+)</text>
        <dbReference type="Rhea" id="RHEA:22628"/>
        <dbReference type="ChEBI" id="CHEBI:15378"/>
        <dbReference type="ChEBI" id="CHEBI:29991"/>
        <dbReference type="ChEBI" id="CHEBI:30616"/>
        <dbReference type="ChEBI" id="CHEBI:43474"/>
        <dbReference type="ChEBI" id="CHEBI:58443"/>
        <dbReference type="ChEBI" id="CHEBI:77657"/>
        <dbReference type="ChEBI" id="CHEBI:456216"/>
        <dbReference type="EC" id="6.3.2.6"/>
    </reaction>
</comment>
<comment type="pathway">
    <text evidence="1">Purine metabolism; IMP biosynthesis via de novo pathway; 5-amino-1-(5-phospho-D-ribosyl)imidazole-4-carboxamide from 5-amino-1-(5-phospho-D-ribosyl)imidazole-4-carboxylate: step 1/2.</text>
</comment>
<comment type="similarity">
    <text evidence="1">Belongs to the SAICAR synthetase family.</text>
</comment>
<gene>
    <name evidence="1" type="primary">purC</name>
    <name type="ordered locus">SeAg_B2632</name>
</gene>
<feature type="chain" id="PRO_1000096008" description="Phosphoribosylaminoimidazole-succinocarboxamide synthase">
    <location>
        <begin position="1"/>
        <end position="237"/>
    </location>
</feature>
<proteinExistence type="inferred from homology"/>
<accession>B5F0L3</accession>
<evidence type="ECO:0000255" key="1">
    <source>
        <dbReference type="HAMAP-Rule" id="MF_00137"/>
    </source>
</evidence>
<reference key="1">
    <citation type="journal article" date="2011" name="J. Bacteriol.">
        <title>Comparative genomics of 28 Salmonella enterica isolates: evidence for CRISPR-mediated adaptive sublineage evolution.</title>
        <authorList>
            <person name="Fricke W.F."/>
            <person name="Mammel M.K."/>
            <person name="McDermott P.F."/>
            <person name="Tartera C."/>
            <person name="White D.G."/>
            <person name="Leclerc J.E."/>
            <person name="Ravel J."/>
            <person name="Cebula T.A."/>
        </authorList>
    </citation>
    <scope>NUCLEOTIDE SEQUENCE [LARGE SCALE GENOMIC DNA]</scope>
    <source>
        <strain>SL483</strain>
    </source>
</reference>